<gene>
    <name type="primary">ylyA</name>
    <name type="synonym">ylmK</name>
    <name type="ordered locus">BSU15440</name>
</gene>
<evidence type="ECO:0000255" key="1">
    <source>
        <dbReference type="PROSITE-ProRule" id="PRU00510"/>
    </source>
</evidence>
<evidence type="ECO:0000305" key="2"/>
<accession>Q45478</accession>
<accession>O31731</accession>
<feature type="chain" id="PRO_0000187554" description="Uncharacterized protein YlyA">
    <location>
        <begin position="1"/>
        <end position="124"/>
    </location>
</feature>
<feature type="zinc finger region" description="dksA C4-type; degenerate" evidence="1">
    <location>
        <begin position="73"/>
        <end position="94"/>
    </location>
</feature>
<feature type="sequence conflict" description="In Ref. 4." evidence="2" ref="4">
    <original>Y</original>
    <variation>I</variation>
    <location>
        <position position="49"/>
    </location>
</feature>
<feature type="sequence conflict" description="In Ref. 4." evidence="2" ref="4">
    <original>L</original>
    <variation>S</variation>
    <location>
        <position position="122"/>
    </location>
</feature>
<keyword id="KW-0479">Metal-binding</keyword>
<keyword id="KW-1185">Reference proteome</keyword>
<keyword id="KW-0862">Zinc</keyword>
<keyword id="KW-0863">Zinc-finger</keyword>
<protein>
    <recommendedName>
        <fullName>Uncharacterized protein YlyA</fullName>
    </recommendedName>
    <alternativeName>
        <fullName>ORF-T</fullName>
    </alternativeName>
</protein>
<proteinExistence type="predicted"/>
<comment type="sequence caution" evidence="2">
    <conflict type="frameshift">
        <sequence resource="EMBL" id="U08116"/>
    </conflict>
</comment>
<sequence length="124" mass="14115">MNDQLTAIYTELLLMKEELQSRLFEYSCFQVSTSPQAAINQKQKATLIYHIKEELQDVLLALSKIENGTFGYCEETGAPIPLAKLAVLPTARTANDFLYSVQFEKKTLPIWKSTDIEYGQALYE</sequence>
<organism>
    <name type="scientific">Bacillus subtilis (strain 168)</name>
    <dbReference type="NCBI Taxonomy" id="224308"/>
    <lineage>
        <taxon>Bacteria</taxon>
        <taxon>Bacillati</taxon>
        <taxon>Bacillota</taxon>
        <taxon>Bacilli</taxon>
        <taxon>Bacillales</taxon>
        <taxon>Bacillaceae</taxon>
        <taxon>Bacillus</taxon>
    </lineage>
</organism>
<name>YLYA_BACSU</name>
<dbReference type="EMBL" id="U48870">
    <property type="protein sequence ID" value="AAB57765.1"/>
    <property type="molecule type" value="Genomic_DNA"/>
</dbReference>
<dbReference type="EMBL" id="AL009126">
    <property type="protein sequence ID" value="CAB13418.2"/>
    <property type="molecule type" value="Genomic_DNA"/>
</dbReference>
<dbReference type="EMBL" id="U08116">
    <property type="status" value="NOT_ANNOTATED_CDS"/>
    <property type="molecule type" value="Unassigned_DNA"/>
</dbReference>
<dbReference type="PIR" id="A69883">
    <property type="entry name" value="A69883"/>
</dbReference>
<dbReference type="RefSeq" id="NP_389427.2">
    <property type="nucleotide sequence ID" value="NC_000964.3"/>
</dbReference>
<dbReference type="RefSeq" id="WP_003245479.1">
    <property type="nucleotide sequence ID" value="NZ_OZ025638.1"/>
</dbReference>
<dbReference type="SMR" id="Q45478"/>
<dbReference type="FunCoup" id="Q45478">
    <property type="interactions" value="64"/>
</dbReference>
<dbReference type="STRING" id="224308.BSU15440"/>
<dbReference type="PaxDb" id="224308-BSU15440"/>
<dbReference type="EnsemblBacteria" id="CAB13418">
    <property type="protein sequence ID" value="CAB13418"/>
    <property type="gene ID" value="BSU_15440"/>
</dbReference>
<dbReference type="GeneID" id="938068"/>
<dbReference type="KEGG" id="bsu:BSU15440"/>
<dbReference type="PATRIC" id="fig|224308.179.peg.1683"/>
<dbReference type="eggNOG" id="COG1734">
    <property type="taxonomic scope" value="Bacteria"/>
</dbReference>
<dbReference type="InParanoid" id="Q45478"/>
<dbReference type="OrthoDB" id="2875147at2"/>
<dbReference type="PhylomeDB" id="Q45478"/>
<dbReference type="BioCyc" id="BSUB:BSU15440-MONOMER"/>
<dbReference type="Proteomes" id="UP000001570">
    <property type="component" value="Chromosome"/>
</dbReference>
<dbReference type="GO" id="GO:0008270">
    <property type="term" value="F:zinc ion binding"/>
    <property type="evidence" value="ECO:0007669"/>
    <property type="project" value="UniProtKB-KW"/>
</dbReference>
<dbReference type="Gene3D" id="1.20.120.910">
    <property type="entry name" value="DksA, coiled-coil domain"/>
    <property type="match status" value="1"/>
</dbReference>
<dbReference type="InterPro" id="IPR016841">
    <property type="entry name" value="Tscrpt_reg_DksA-rel_prd"/>
</dbReference>
<dbReference type="InterPro" id="IPR000962">
    <property type="entry name" value="Znf_DskA_TraR"/>
</dbReference>
<dbReference type="InterPro" id="IPR020458">
    <property type="entry name" value="Znf_DskA_TraR_CS"/>
</dbReference>
<dbReference type="PANTHER" id="PTHR33823:SF5">
    <property type="entry name" value="DNAK SUPPRESSOR PROTEIN"/>
    <property type="match status" value="1"/>
</dbReference>
<dbReference type="PANTHER" id="PTHR33823">
    <property type="entry name" value="RNA POLYMERASE-BINDING TRANSCRIPTION FACTOR DKSA-RELATED"/>
    <property type="match status" value="1"/>
</dbReference>
<dbReference type="Pfam" id="PF01258">
    <property type="entry name" value="zf-dskA_traR"/>
    <property type="match status" value="1"/>
</dbReference>
<dbReference type="PIRSF" id="PIRSF026544">
    <property type="entry name" value="DksA_homologue_prd"/>
    <property type="match status" value="1"/>
</dbReference>
<dbReference type="PROSITE" id="PS01102">
    <property type="entry name" value="ZF_DKSA_1"/>
    <property type="match status" value="1"/>
</dbReference>
<dbReference type="PROSITE" id="PS51128">
    <property type="entry name" value="ZF_DKSA_2"/>
    <property type="match status" value="1"/>
</dbReference>
<reference key="1">
    <citation type="submission" date="1996-02" db="EMBL/GenBank/DDBJ databases">
        <authorList>
            <person name="Pragai Z."/>
            <person name="Tjalsma H."/>
            <person name="Bolhuis A."/>
            <person name="van Dijl J.M."/>
            <person name="Venema G."/>
            <person name="Bron S."/>
        </authorList>
    </citation>
    <scope>NUCLEOTIDE SEQUENCE [GENOMIC DNA]</scope>
    <source>
        <strain>168</strain>
    </source>
</reference>
<reference key="2">
    <citation type="journal article" date="1997" name="Nature">
        <title>The complete genome sequence of the Gram-positive bacterium Bacillus subtilis.</title>
        <authorList>
            <person name="Kunst F."/>
            <person name="Ogasawara N."/>
            <person name="Moszer I."/>
            <person name="Albertini A.M."/>
            <person name="Alloni G."/>
            <person name="Azevedo V."/>
            <person name="Bertero M.G."/>
            <person name="Bessieres P."/>
            <person name="Bolotin A."/>
            <person name="Borchert S."/>
            <person name="Borriss R."/>
            <person name="Boursier L."/>
            <person name="Brans A."/>
            <person name="Braun M."/>
            <person name="Brignell S.C."/>
            <person name="Bron S."/>
            <person name="Brouillet S."/>
            <person name="Bruschi C.V."/>
            <person name="Caldwell B."/>
            <person name="Capuano V."/>
            <person name="Carter N.M."/>
            <person name="Choi S.-K."/>
            <person name="Codani J.-J."/>
            <person name="Connerton I.F."/>
            <person name="Cummings N.J."/>
            <person name="Daniel R.A."/>
            <person name="Denizot F."/>
            <person name="Devine K.M."/>
            <person name="Duesterhoeft A."/>
            <person name="Ehrlich S.D."/>
            <person name="Emmerson P.T."/>
            <person name="Entian K.-D."/>
            <person name="Errington J."/>
            <person name="Fabret C."/>
            <person name="Ferrari E."/>
            <person name="Foulger D."/>
            <person name="Fritz C."/>
            <person name="Fujita M."/>
            <person name="Fujita Y."/>
            <person name="Fuma S."/>
            <person name="Galizzi A."/>
            <person name="Galleron N."/>
            <person name="Ghim S.-Y."/>
            <person name="Glaser P."/>
            <person name="Goffeau A."/>
            <person name="Golightly E.J."/>
            <person name="Grandi G."/>
            <person name="Guiseppi G."/>
            <person name="Guy B.J."/>
            <person name="Haga K."/>
            <person name="Haiech J."/>
            <person name="Harwood C.R."/>
            <person name="Henaut A."/>
            <person name="Hilbert H."/>
            <person name="Holsappel S."/>
            <person name="Hosono S."/>
            <person name="Hullo M.-F."/>
            <person name="Itaya M."/>
            <person name="Jones L.-M."/>
            <person name="Joris B."/>
            <person name="Karamata D."/>
            <person name="Kasahara Y."/>
            <person name="Klaerr-Blanchard M."/>
            <person name="Klein C."/>
            <person name="Kobayashi Y."/>
            <person name="Koetter P."/>
            <person name="Koningstein G."/>
            <person name="Krogh S."/>
            <person name="Kumano M."/>
            <person name="Kurita K."/>
            <person name="Lapidus A."/>
            <person name="Lardinois S."/>
            <person name="Lauber J."/>
            <person name="Lazarevic V."/>
            <person name="Lee S.-M."/>
            <person name="Levine A."/>
            <person name="Liu H."/>
            <person name="Masuda S."/>
            <person name="Mauel C."/>
            <person name="Medigue C."/>
            <person name="Medina N."/>
            <person name="Mellado R.P."/>
            <person name="Mizuno M."/>
            <person name="Moestl D."/>
            <person name="Nakai S."/>
            <person name="Noback M."/>
            <person name="Noone D."/>
            <person name="O'Reilly M."/>
            <person name="Ogawa K."/>
            <person name="Ogiwara A."/>
            <person name="Oudega B."/>
            <person name="Park S.-H."/>
            <person name="Parro V."/>
            <person name="Pohl T.M."/>
            <person name="Portetelle D."/>
            <person name="Porwollik S."/>
            <person name="Prescott A.M."/>
            <person name="Presecan E."/>
            <person name="Pujic P."/>
            <person name="Purnelle B."/>
            <person name="Rapoport G."/>
            <person name="Rey M."/>
            <person name="Reynolds S."/>
            <person name="Rieger M."/>
            <person name="Rivolta C."/>
            <person name="Rocha E."/>
            <person name="Roche B."/>
            <person name="Rose M."/>
            <person name="Sadaie Y."/>
            <person name="Sato T."/>
            <person name="Scanlan E."/>
            <person name="Schleich S."/>
            <person name="Schroeter R."/>
            <person name="Scoffone F."/>
            <person name="Sekiguchi J."/>
            <person name="Sekowska A."/>
            <person name="Seror S.J."/>
            <person name="Serror P."/>
            <person name="Shin B.-S."/>
            <person name="Soldo B."/>
            <person name="Sorokin A."/>
            <person name="Tacconi E."/>
            <person name="Takagi T."/>
            <person name="Takahashi H."/>
            <person name="Takemaru K."/>
            <person name="Takeuchi M."/>
            <person name="Tamakoshi A."/>
            <person name="Tanaka T."/>
            <person name="Terpstra P."/>
            <person name="Tognoni A."/>
            <person name="Tosato V."/>
            <person name="Uchiyama S."/>
            <person name="Vandenbol M."/>
            <person name="Vannier F."/>
            <person name="Vassarotti A."/>
            <person name="Viari A."/>
            <person name="Wambutt R."/>
            <person name="Wedler E."/>
            <person name="Wedler H."/>
            <person name="Weitzenegger T."/>
            <person name="Winters P."/>
            <person name="Wipat A."/>
            <person name="Yamamoto H."/>
            <person name="Yamane K."/>
            <person name="Yasumoto K."/>
            <person name="Yata K."/>
            <person name="Yoshida K."/>
            <person name="Yoshikawa H.-F."/>
            <person name="Zumstein E."/>
            <person name="Yoshikawa H."/>
            <person name="Danchin A."/>
        </authorList>
    </citation>
    <scope>NUCLEOTIDE SEQUENCE [LARGE SCALE GENOMIC DNA]</scope>
    <source>
        <strain>168</strain>
    </source>
</reference>
<reference key="3">
    <citation type="journal article" date="2009" name="Microbiology">
        <title>From a consortium sequence to a unified sequence: the Bacillus subtilis 168 reference genome a decade later.</title>
        <authorList>
            <person name="Barbe V."/>
            <person name="Cruveiller S."/>
            <person name="Kunst F."/>
            <person name="Lenoble P."/>
            <person name="Meurice G."/>
            <person name="Sekowska A."/>
            <person name="Vallenet D."/>
            <person name="Wang T."/>
            <person name="Moszer I."/>
            <person name="Medigue C."/>
            <person name="Danchin A."/>
        </authorList>
    </citation>
    <scope>SEQUENCE REVISION TO 12-14 AND 22</scope>
</reference>
<reference key="4">
    <citation type="submission" date="1994-03" db="EMBL/GenBank/DDBJ databases">
        <authorList>
            <person name="Baek-Rak L."/>
            <person name="Jeong-Hyun K."/>
        </authorList>
    </citation>
    <scope>NUCLEOTIDE SEQUENCE [GENOMIC DNA] OF 48-124</scope>
</reference>